<sequence>MSKPGGHARHGRRDGIDPVLRSRARRRALQAVYAWQIAGGFAKQVIAQFAHEQAHEVADLAYFESLVEGVLSNRSELDTALTPYLDRGVEEVDAIERAVLRLAAYELLYRQDVPYRVVINEAIETAKRFGSEHGHTYVNGVLDRAAVEWRKMESGASGA</sequence>
<protein>
    <recommendedName>
        <fullName evidence="1">Transcription antitermination protein NusB</fullName>
    </recommendedName>
    <alternativeName>
        <fullName evidence="1">Antitermination factor NusB</fullName>
    </alternativeName>
</protein>
<dbReference type="EMBL" id="AM920689">
    <property type="protein sequence ID" value="CAP53022.1"/>
    <property type="molecule type" value="Genomic_DNA"/>
</dbReference>
<dbReference type="SMR" id="B0RVD1"/>
<dbReference type="KEGG" id="xca:xcc-b100_3657"/>
<dbReference type="HOGENOM" id="CLU_087843_4_1_6"/>
<dbReference type="Proteomes" id="UP000001188">
    <property type="component" value="Chromosome"/>
</dbReference>
<dbReference type="GO" id="GO:0005829">
    <property type="term" value="C:cytosol"/>
    <property type="evidence" value="ECO:0007669"/>
    <property type="project" value="TreeGrafter"/>
</dbReference>
<dbReference type="GO" id="GO:0003723">
    <property type="term" value="F:RNA binding"/>
    <property type="evidence" value="ECO:0007669"/>
    <property type="project" value="UniProtKB-UniRule"/>
</dbReference>
<dbReference type="GO" id="GO:0006353">
    <property type="term" value="P:DNA-templated transcription termination"/>
    <property type="evidence" value="ECO:0007669"/>
    <property type="project" value="UniProtKB-UniRule"/>
</dbReference>
<dbReference type="GO" id="GO:0031564">
    <property type="term" value="P:transcription antitermination"/>
    <property type="evidence" value="ECO:0007669"/>
    <property type="project" value="UniProtKB-KW"/>
</dbReference>
<dbReference type="FunFam" id="1.10.940.10:FF:000001">
    <property type="entry name" value="Transcription antitermination factor NusB"/>
    <property type="match status" value="1"/>
</dbReference>
<dbReference type="Gene3D" id="1.10.940.10">
    <property type="entry name" value="NusB-like"/>
    <property type="match status" value="1"/>
</dbReference>
<dbReference type="HAMAP" id="MF_00073">
    <property type="entry name" value="NusB"/>
    <property type="match status" value="1"/>
</dbReference>
<dbReference type="InterPro" id="IPR035926">
    <property type="entry name" value="NusB-like_sf"/>
</dbReference>
<dbReference type="InterPro" id="IPR011605">
    <property type="entry name" value="NusB_fam"/>
</dbReference>
<dbReference type="InterPro" id="IPR006027">
    <property type="entry name" value="NusB_RsmB_TIM44"/>
</dbReference>
<dbReference type="NCBIfam" id="TIGR01951">
    <property type="entry name" value="nusB"/>
    <property type="match status" value="1"/>
</dbReference>
<dbReference type="PANTHER" id="PTHR11078:SF3">
    <property type="entry name" value="ANTITERMINATION NUSB DOMAIN-CONTAINING PROTEIN"/>
    <property type="match status" value="1"/>
</dbReference>
<dbReference type="PANTHER" id="PTHR11078">
    <property type="entry name" value="N UTILIZATION SUBSTANCE PROTEIN B-RELATED"/>
    <property type="match status" value="1"/>
</dbReference>
<dbReference type="Pfam" id="PF01029">
    <property type="entry name" value="NusB"/>
    <property type="match status" value="1"/>
</dbReference>
<dbReference type="SUPFAM" id="SSF48013">
    <property type="entry name" value="NusB-like"/>
    <property type="match status" value="1"/>
</dbReference>
<keyword id="KW-0694">RNA-binding</keyword>
<keyword id="KW-0804">Transcription</keyword>
<keyword id="KW-0889">Transcription antitermination</keyword>
<keyword id="KW-0805">Transcription regulation</keyword>
<evidence type="ECO:0000255" key="1">
    <source>
        <dbReference type="HAMAP-Rule" id="MF_00073"/>
    </source>
</evidence>
<comment type="function">
    <text evidence="1">Involved in transcription antitermination. Required for transcription of ribosomal RNA (rRNA) genes. Binds specifically to the boxA antiterminator sequence of the ribosomal RNA (rrn) operons.</text>
</comment>
<comment type="similarity">
    <text evidence="1">Belongs to the NusB family.</text>
</comment>
<name>NUSB_XANCB</name>
<accession>B0RVD1</accession>
<proteinExistence type="inferred from homology"/>
<reference key="1">
    <citation type="journal article" date="2008" name="J. Biotechnol.">
        <title>The genome of Xanthomonas campestris pv. campestris B100 and its use for the reconstruction of metabolic pathways involved in xanthan biosynthesis.</title>
        <authorList>
            <person name="Vorhoelter F.-J."/>
            <person name="Schneiker S."/>
            <person name="Goesmann A."/>
            <person name="Krause L."/>
            <person name="Bekel T."/>
            <person name="Kaiser O."/>
            <person name="Linke B."/>
            <person name="Patschkowski T."/>
            <person name="Rueckert C."/>
            <person name="Schmid J."/>
            <person name="Sidhu V.K."/>
            <person name="Sieber V."/>
            <person name="Tauch A."/>
            <person name="Watt S.A."/>
            <person name="Weisshaar B."/>
            <person name="Becker A."/>
            <person name="Niehaus K."/>
            <person name="Puehler A."/>
        </authorList>
    </citation>
    <scope>NUCLEOTIDE SEQUENCE [LARGE SCALE GENOMIC DNA]</scope>
    <source>
        <strain>B100</strain>
    </source>
</reference>
<organism>
    <name type="scientific">Xanthomonas campestris pv. campestris (strain B100)</name>
    <dbReference type="NCBI Taxonomy" id="509169"/>
    <lineage>
        <taxon>Bacteria</taxon>
        <taxon>Pseudomonadati</taxon>
        <taxon>Pseudomonadota</taxon>
        <taxon>Gammaproteobacteria</taxon>
        <taxon>Lysobacterales</taxon>
        <taxon>Lysobacteraceae</taxon>
        <taxon>Xanthomonas</taxon>
    </lineage>
</organism>
<feature type="chain" id="PRO_1000092600" description="Transcription antitermination protein NusB">
    <location>
        <begin position="1"/>
        <end position="159"/>
    </location>
</feature>
<gene>
    <name evidence="1" type="primary">nusB</name>
    <name type="ordered locus">xcc-b100_3657</name>
</gene>